<comment type="function">
    <text evidence="2">CoA transferase having broad substrate specificity for short-chain acyl-CoA thioesters with the activity decreasing when the length of the carboxylic acid chain exceeds four carbons. Exhibits high activity with acetoacetyl-CoA, propionyl-CoA, crotonoyl-CoA or butyryl-CoA as donors, with acetate as an acceptor. When acetyl-CoA is used as the donor, propionate, acetoacetate, butyrate, isobutyrate, and 4-hydroxybutyrate can be utilized as acceptors but not isovalerate. May play a role in short-chain fatty acid metabolism in E.coli.</text>
</comment>
<comment type="catalytic activity">
    <reaction evidence="2">
        <text>an acyl-CoA + acetate = a carboxylate + acetyl-CoA</text>
        <dbReference type="Rhea" id="RHEA:13381"/>
        <dbReference type="ChEBI" id="CHEBI:29067"/>
        <dbReference type="ChEBI" id="CHEBI:30089"/>
        <dbReference type="ChEBI" id="CHEBI:57288"/>
        <dbReference type="ChEBI" id="CHEBI:58342"/>
        <dbReference type="EC" id="2.8.3.8"/>
    </reaction>
</comment>
<comment type="subunit">
    <text evidence="2">Homotetramer; dimer of dimers.</text>
</comment>
<comment type="mass spectrometry" mass="59628.0" method="Electrospray" evidence="2"/>
<comment type="miscellaneous">
    <text evidence="2">Formation of the covalent enzyme-CoA thioester intermediate proceeds via an unstable anhydride species formed between the carboxylate group of the catalytic glutamate of the enzyme and the carbonyl carbon of the thioester linkage of the substrate.</text>
</comment>
<comment type="similarity">
    <text evidence="1">Belongs to the 3-oxoacid CoA-transferase family.</text>
</comment>
<protein>
    <recommendedName>
        <fullName evidence="3">Acetate CoA-transferase YdiF</fullName>
        <ecNumber evidence="2">2.8.3.8</ecNumber>
    </recommendedName>
    <alternativeName>
        <fullName>Short-chain acyl-CoA:acetate CoA-transferase</fullName>
    </alternativeName>
</protein>
<name>YDIF_ECO57</name>
<proteinExistence type="evidence at protein level"/>
<organism>
    <name type="scientific">Escherichia coli O157:H7</name>
    <dbReference type="NCBI Taxonomy" id="83334"/>
    <lineage>
        <taxon>Bacteria</taxon>
        <taxon>Pseudomonadati</taxon>
        <taxon>Pseudomonadota</taxon>
        <taxon>Gammaproteobacteria</taxon>
        <taxon>Enterobacterales</taxon>
        <taxon>Enterobacteriaceae</taxon>
        <taxon>Escherichia</taxon>
    </lineage>
</organism>
<keyword id="KW-0002">3D-structure</keyword>
<keyword id="KW-1185">Reference proteome</keyword>
<keyword id="KW-0808">Transferase</keyword>
<gene>
    <name evidence="5" type="primary">ydiF</name>
    <name type="ordered locus">Z2722</name>
    <name type="ordered locus">ECs2401</name>
</gene>
<sequence length="531" mass="57504">MKPVKPPRINGRVPVLSAQEAVNYIPDEATLCVLGAGGGILEATTLITALADKYKQTQTPRNLSIISPTGLGDRADRGISPLAQEGLVKWALCGHWGQSPRISDLAEQNKIIAYNYPQGVLTQTLRAAAAHQPGIISDIGIGTFVDPRQQGGKLNEVTKEDLIKLVEFDNKEYLYYKAIAPDIAFIRATTCDSEGYATFEDEVMYLDALVIAQAVHNNGGIVMMQVQKMVKKATLHPKSVRIPGYLVDIVVVDPDQSQLYGGAPVNRFISGDFTLDDSTKLSLPLNQRKLVARRALFEMRKGAVGNVGVGIADGIGLVAREEGCADDFILTVETGPIGGITSQGIAFGANVNTRAILDMTSQFDFYHGGGLDVCYLSFAEVDQHGNVGVHKFNGKIMGTGGFIDISATSKKIIFCGTLTAGSLKTEIADGKLNIVQEGRVKKFIRELPEITFSGKIALERGLDVRYITERAVFTLKEDGLHLIEIAPGVDLQKDILDKMDFTPVISPELKLMDERLFIDAAMGFVLPEAAH</sequence>
<feature type="chain" id="PRO_0000418373" description="Acetate CoA-transferase YdiF">
    <location>
        <begin position="1"/>
        <end position="531"/>
    </location>
</feature>
<feature type="active site" description="5-glutamyl coenzyme A thioester intermediate" evidence="4">
    <location>
        <position position="333"/>
    </location>
</feature>
<feature type="helix" evidence="8">
    <location>
        <begin position="18"/>
        <end position="22"/>
    </location>
</feature>
<feature type="strand" evidence="8">
    <location>
        <begin position="30"/>
        <end position="33"/>
    </location>
</feature>
<feature type="turn" evidence="8">
    <location>
        <begin position="38"/>
        <end position="41"/>
    </location>
</feature>
<feature type="helix" evidence="8">
    <location>
        <begin position="44"/>
        <end position="57"/>
    </location>
</feature>
<feature type="strand" evidence="8">
    <location>
        <begin position="62"/>
        <end position="69"/>
    </location>
</feature>
<feature type="strand" evidence="8">
    <location>
        <begin position="72"/>
        <end position="77"/>
    </location>
</feature>
<feature type="helix" evidence="8">
    <location>
        <begin position="80"/>
        <end position="82"/>
    </location>
</feature>
<feature type="turn" evidence="8">
    <location>
        <begin position="85"/>
        <end position="87"/>
    </location>
</feature>
<feature type="strand" evidence="8">
    <location>
        <begin position="88"/>
        <end position="95"/>
    </location>
</feature>
<feature type="helix" evidence="8">
    <location>
        <begin position="100"/>
        <end position="107"/>
    </location>
</feature>
<feature type="strand" evidence="8">
    <location>
        <begin position="110"/>
        <end position="114"/>
    </location>
</feature>
<feature type="helix" evidence="8">
    <location>
        <begin position="118"/>
        <end position="129"/>
    </location>
</feature>
<feature type="strand" evidence="8">
    <location>
        <begin position="134"/>
        <end position="137"/>
    </location>
</feature>
<feature type="turn" evidence="8">
    <location>
        <begin position="139"/>
        <end position="142"/>
    </location>
</feature>
<feature type="turn" evidence="8">
    <location>
        <begin position="147"/>
        <end position="152"/>
    </location>
</feature>
<feature type="strand" evidence="8">
    <location>
        <begin position="155"/>
        <end position="157"/>
    </location>
</feature>
<feature type="strand" evidence="8">
    <location>
        <begin position="163"/>
        <end position="168"/>
    </location>
</feature>
<feature type="strand" evidence="8">
    <location>
        <begin position="171"/>
        <end position="177"/>
    </location>
</feature>
<feature type="strand" evidence="8">
    <location>
        <begin position="182"/>
        <end position="187"/>
    </location>
</feature>
<feature type="strand" evidence="8">
    <location>
        <begin position="189"/>
        <end position="192"/>
    </location>
</feature>
<feature type="helix" evidence="8">
    <location>
        <begin position="208"/>
        <end position="216"/>
    </location>
</feature>
<feature type="turn" evidence="8">
    <location>
        <begin position="217"/>
        <end position="219"/>
    </location>
</feature>
<feature type="strand" evidence="8">
    <location>
        <begin position="221"/>
        <end position="230"/>
    </location>
</feature>
<feature type="helix" evidence="8">
    <location>
        <begin position="237"/>
        <end position="239"/>
    </location>
</feature>
<feature type="strand" evidence="8">
    <location>
        <begin position="240"/>
        <end position="242"/>
    </location>
</feature>
<feature type="helix" evidence="8">
    <location>
        <begin position="244"/>
        <end position="246"/>
    </location>
</feature>
<feature type="strand" evidence="8">
    <location>
        <begin position="248"/>
        <end position="252"/>
    </location>
</feature>
<feature type="turn" evidence="8">
    <location>
        <begin position="267"/>
        <end position="271"/>
    </location>
</feature>
<feature type="helix" evidence="8">
    <location>
        <begin position="287"/>
        <end position="296"/>
    </location>
</feature>
<feature type="strand" evidence="8">
    <location>
        <begin position="304"/>
        <end position="307"/>
    </location>
</feature>
<feature type="turn" evidence="8">
    <location>
        <begin position="311"/>
        <end position="314"/>
    </location>
</feature>
<feature type="helix" evidence="8">
    <location>
        <begin position="315"/>
        <end position="321"/>
    </location>
</feature>
<feature type="helix" evidence="8">
    <location>
        <begin position="325"/>
        <end position="327"/>
    </location>
</feature>
<feature type="strand" evidence="8">
    <location>
        <begin position="328"/>
        <end position="331"/>
    </location>
</feature>
<feature type="strand" evidence="8">
    <location>
        <begin position="335"/>
        <end position="338"/>
    </location>
</feature>
<feature type="strand" evidence="8">
    <location>
        <begin position="354"/>
        <end position="356"/>
    </location>
</feature>
<feature type="helix" evidence="8">
    <location>
        <begin position="359"/>
        <end position="367"/>
    </location>
</feature>
<feature type="strand" evidence="8">
    <location>
        <begin position="372"/>
        <end position="377"/>
    </location>
</feature>
<feature type="strand" evidence="8">
    <location>
        <begin position="379"/>
        <end position="382"/>
    </location>
</feature>
<feature type="strand" evidence="8">
    <location>
        <begin position="390"/>
        <end position="392"/>
    </location>
</feature>
<feature type="helix" evidence="8">
    <location>
        <begin position="402"/>
        <end position="406"/>
    </location>
</feature>
<feature type="strand" evidence="8">
    <location>
        <begin position="410"/>
        <end position="415"/>
    </location>
</feature>
<feature type="strand" evidence="8">
    <location>
        <begin position="418"/>
        <end position="422"/>
    </location>
</feature>
<feature type="strand" evidence="8">
    <location>
        <begin position="424"/>
        <end position="427"/>
    </location>
</feature>
<feature type="strand" evidence="8">
    <location>
        <begin position="432"/>
        <end position="436"/>
    </location>
</feature>
<feature type="strand" evidence="8">
    <location>
        <begin position="439"/>
        <end position="445"/>
    </location>
</feature>
<feature type="helix" evidence="8">
    <location>
        <begin position="454"/>
        <end position="459"/>
    </location>
</feature>
<feature type="strand" evidence="8">
    <location>
        <begin position="463"/>
        <end position="467"/>
    </location>
</feature>
<feature type="strand" evidence="8">
    <location>
        <begin position="469"/>
        <end position="476"/>
    </location>
</feature>
<feature type="strand" evidence="8">
    <location>
        <begin position="479"/>
        <end position="485"/>
    </location>
</feature>
<feature type="helix" evidence="8">
    <location>
        <begin position="491"/>
        <end position="494"/>
    </location>
</feature>
<feature type="helix" evidence="8">
    <location>
        <begin position="496"/>
        <end position="498"/>
    </location>
</feature>
<feature type="strand" evidence="8">
    <location>
        <begin position="499"/>
        <end position="501"/>
    </location>
</feature>
<feature type="strand" evidence="8">
    <location>
        <begin position="504"/>
        <end position="511"/>
    </location>
</feature>
<feature type="helix" evidence="8">
    <location>
        <begin position="514"/>
        <end position="517"/>
    </location>
</feature>
<feature type="strand" evidence="8">
    <location>
        <begin position="518"/>
        <end position="520"/>
    </location>
</feature>
<dbReference type="EC" id="2.8.3.8" evidence="2"/>
<dbReference type="EMBL" id="AE005174">
    <property type="protein sequence ID" value="AAG56681.1"/>
    <property type="molecule type" value="Genomic_DNA"/>
</dbReference>
<dbReference type="EMBL" id="BA000007">
    <property type="protein sequence ID" value="BAB35824.1"/>
    <property type="molecule type" value="Genomic_DNA"/>
</dbReference>
<dbReference type="PIR" id="A90929">
    <property type="entry name" value="A90929"/>
</dbReference>
<dbReference type="PIR" id="E85777">
    <property type="entry name" value="E85777"/>
</dbReference>
<dbReference type="RefSeq" id="NP_310428.1">
    <property type="nucleotide sequence ID" value="NC_002695.1"/>
</dbReference>
<dbReference type="RefSeq" id="WP_000805650.1">
    <property type="nucleotide sequence ID" value="NZ_VOAI01000007.1"/>
</dbReference>
<dbReference type="PDB" id="2AHU">
    <property type="method" value="X-ray"/>
    <property type="resolution" value="1.90 A"/>
    <property type="chains" value="A/B/C/D=1-531"/>
</dbReference>
<dbReference type="PDB" id="2AHV">
    <property type="method" value="X-ray"/>
    <property type="resolution" value="2.00 A"/>
    <property type="chains" value="A/B/C/D=1-531"/>
</dbReference>
<dbReference type="PDB" id="2AHW">
    <property type="method" value="X-ray"/>
    <property type="resolution" value="2.15 A"/>
    <property type="chains" value="A/B/C/D=1-531"/>
</dbReference>
<dbReference type="PDBsum" id="2AHU"/>
<dbReference type="PDBsum" id="2AHV"/>
<dbReference type="PDBsum" id="2AHW"/>
<dbReference type="SMR" id="Q8X5X6"/>
<dbReference type="STRING" id="155864.Z2722"/>
<dbReference type="GeneID" id="912561"/>
<dbReference type="KEGG" id="ece:Z2722"/>
<dbReference type="KEGG" id="ecs:ECs_2401"/>
<dbReference type="PATRIC" id="fig|386585.9.peg.2514"/>
<dbReference type="eggNOG" id="COG4670">
    <property type="taxonomic scope" value="Bacteria"/>
</dbReference>
<dbReference type="HOGENOM" id="CLU_026774_4_0_6"/>
<dbReference type="OMA" id="VKTMGQI"/>
<dbReference type="EvolutionaryTrace" id="Q8X5X6"/>
<dbReference type="Proteomes" id="UP000000558">
    <property type="component" value="Chromosome"/>
</dbReference>
<dbReference type="Proteomes" id="UP000002519">
    <property type="component" value="Chromosome"/>
</dbReference>
<dbReference type="GO" id="GO:0008775">
    <property type="term" value="F:acetate CoA-transferase activity"/>
    <property type="evidence" value="ECO:0000314"/>
    <property type="project" value="UniProtKB"/>
</dbReference>
<dbReference type="GO" id="GO:0046952">
    <property type="term" value="P:ketone body catabolic process"/>
    <property type="evidence" value="ECO:0007669"/>
    <property type="project" value="InterPro"/>
</dbReference>
<dbReference type="GO" id="GO:0051289">
    <property type="term" value="P:protein homotetramerization"/>
    <property type="evidence" value="ECO:0000314"/>
    <property type="project" value="UniProtKB"/>
</dbReference>
<dbReference type="GO" id="GO:0046459">
    <property type="term" value="P:short-chain fatty acid metabolic process"/>
    <property type="evidence" value="ECO:0000314"/>
    <property type="project" value="UniProtKB"/>
</dbReference>
<dbReference type="FunFam" id="3.40.1080.10:FF:000007">
    <property type="entry name" value="Acetate CoA-transferase YdiF"/>
    <property type="match status" value="1"/>
</dbReference>
<dbReference type="FunFam" id="3.40.1080.10:FF:000008">
    <property type="entry name" value="Acetate CoA-transferase YdiF"/>
    <property type="match status" value="1"/>
</dbReference>
<dbReference type="Gene3D" id="3.40.1080.10">
    <property type="entry name" value="Glutaconate Coenzyme A-transferase"/>
    <property type="match status" value="2"/>
</dbReference>
<dbReference type="InterPro" id="IPR014388">
    <property type="entry name" value="3-oxoacid_CoA-transferase"/>
</dbReference>
<dbReference type="InterPro" id="IPR004165">
    <property type="entry name" value="CoA_trans_fam_I"/>
</dbReference>
<dbReference type="InterPro" id="IPR037171">
    <property type="entry name" value="NagB/RpiA_transferase-like"/>
</dbReference>
<dbReference type="PANTHER" id="PTHR43293">
    <property type="entry name" value="ACETATE COA-TRANSFERASE YDIF"/>
    <property type="match status" value="1"/>
</dbReference>
<dbReference type="PANTHER" id="PTHR43293:SF1">
    <property type="entry name" value="ACETATE COA-TRANSFERASE YDIF"/>
    <property type="match status" value="1"/>
</dbReference>
<dbReference type="Pfam" id="PF01144">
    <property type="entry name" value="CoA_trans"/>
    <property type="match status" value="1"/>
</dbReference>
<dbReference type="PIRSF" id="PIRSF000858">
    <property type="entry name" value="SCOT-t"/>
    <property type="match status" value="1"/>
</dbReference>
<dbReference type="SMART" id="SM00882">
    <property type="entry name" value="CoA_trans"/>
    <property type="match status" value="1"/>
</dbReference>
<dbReference type="SUPFAM" id="SSF100950">
    <property type="entry name" value="NagB/RpiA/CoA transferase-like"/>
    <property type="match status" value="2"/>
</dbReference>
<evidence type="ECO:0000255" key="1"/>
<evidence type="ECO:0000269" key="2">
    <source>
    </source>
</evidence>
<evidence type="ECO:0000305" key="3"/>
<evidence type="ECO:0000305" key="4">
    <source>
    </source>
</evidence>
<evidence type="ECO:0000312" key="5">
    <source>
        <dbReference type="EMBL" id="AAG56681.1"/>
    </source>
</evidence>
<evidence type="ECO:0000312" key="6">
    <source>
        <dbReference type="EMBL" id="BAB35824.1"/>
    </source>
</evidence>
<evidence type="ECO:0000312" key="7">
    <source>
        <dbReference type="PDB" id="2AHW"/>
    </source>
</evidence>
<evidence type="ECO:0007829" key="8">
    <source>
        <dbReference type="PDB" id="2AHU"/>
    </source>
</evidence>
<reference evidence="5" key="1">
    <citation type="journal article" date="2001" name="Nature">
        <title>Genome sequence of enterohaemorrhagic Escherichia coli O157:H7.</title>
        <authorList>
            <person name="Perna N.T."/>
            <person name="Plunkett G. III"/>
            <person name="Burland V."/>
            <person name="Mau B."/>
            <person name="Glasner J.D."/>
            <person name="Rose D.J."/>
            <person name="Mayhew G.F."/>
            <person name="Evans P.S."/>
            <person name="Gregor J."/>
            <person name="Kirkpatrick H.A."/>
            <person name="Posfai G."/>
            <person name="Hackett J."/>
            <person name="Klink S."/>
            <person name="Boutin A."/>
            <person name="Shao Y."/>
            <person name="Miller L."/>
            <person name="Grotbeck E.J."/>
            <person name="Davis N.W."/>
            <person name="Lim A."/>
            <person name="Dimalanta E.T."/>
            <person name="Potamousis K."/>
            <person name="Apodaca J."/>
            <person name="Anantharaman T.S."/>
            <person name="Lin J."/>
            <person name="Yen G."/>
            <person name="Schwartz D.C."/>
            <person name="Welch R.A."/>
            <person name="Blattner F.R."/>
        </authorList>
    </citation>
    <scope>NUCLEOTIDE SEQUENCE [LARGE SCALE GENOMIC DNA]</scope>
    <source>
        <strain>O157:H7 / EDL933 / ATCC 700927 / EHEC</strain>
    </source>
</reference>
<reference evidence="6" key="2">
    <citation type="journal article" date="2001" name="DNA Res.">
        <title>Complete genome sequence of enterohemorrhagic Escherichia coli O157:H7 and genomic comparison with a laboratory strain K-12.</title>
        <authorList>
            <person name="Hayashi T."/>
            <person name="Makino K."/>
            <person name="Ohnishi M."/>
            <person name="Kurokawa K."/>
            <person name="Ishii K."/>
            <person name="Yokoyama K."/>
            <person name="Han C.-G."/>
            <person name="Ohtsubo E."/>
            <person name="Nakayama K."/>
            <person name="Murata T."/>
            <person name="Tanaka M."/>
            <person name="Tobe T."/>
            <person name="Iida T."/>
            <person name="Takami H."/>
            <person name="Honda T."/>
            <person name="Sasakawa C."/>
            <person name="Ogasawara N."/>
            <person name="Yasunaga T."/>
            <person name="Kuhara S."/>
            <person name="Shiba T."/>
            <person name="Hattori M."/>
            <person name="Shinagawa H."/>
        </authorList>
    </citation>
    <scope>NUCLEOTIDE SEQUENCE [LARGE SCALE GENOMIC DNA]</scope>
    <source>
        <strain>O157:H7 / Sakai / RIMD 0509952 / EHEC</strain>
    </source>
</reference>
<reference evidence="3 7" key="3">
    <citation type="journal article" date="2005" name="J. Biol. Chem.">
        <title>Crystallographic trapping of the glutamyl-CoA thioester intermediate of family I CoA transferases.</title>
        <authorList>
            <person name="Rangarajan E.S."/>
            <person name="Li Y."/>
            <person name="Ajamian E."/>
            <person name="Iannuzzi P."/>
            <person name="Kernaghan S.D."/>
            <person name="Fraser M.E."/>
            <person name="Cygler M."/>
            <person name="Matte A."/>
        </authorList>
    </citation>
    <scope>X-RAY CRYSTALLOGRAPHY (1.90 ANGSTROMS) OF APOENZYME AND IN COMPLEXES WITH COENZYME A VIA A GAMMA-GLUTAMYL-THIOESTER COVALENT LINKAGE</scope>
    <scope>FUNCTION</scope>
    <scope>SUBSTRATE SPECIFICITY</scope>
    <scope>CATALYTIC ACTIVITY</scope>
    <scope>SUBUNIT</scope>
    <scope>MASS SPECTROMETRY</scope>
    <scope>REACTION MECHANISM</scope>
    <source>
        <strain>O157:H7 / EDL933 / ATCC 700927 / EHEC</strain>
    </source>
</reference>
<accession>Q8X5X6</accession>
<accession>Q7ADH3</accession>